<dbReference type="EMBL" id="AJ308965">
    <property type="protein sequence ID" value="CAC34944.1"/>
    <property type="molecule type" value="mRNA"/>
</dbReference>
<dbReference type="EMBL" id="AJ308966">
    <property type="protein sequence ID" value="CAC34945.1"/>
    <property type="molecule type" value="mRNA"/>
</dbReference>
<dbReference type="EMBL" id="AF339082">
    <property type="protein sequence ID" value="AAO32949.1"/>
    <property type="molecule type" value="mRNA"/>
</dbReference>
<dbReference type="EMBL" id="AF339083">
    <property type="protein sequence ID" value="AAO32950.1"/>
    <property type="molecule type" value="mRNA"/>
</dbReference>
<dbReference type="EMBL" id="BX682545">
    <property type="status" value="NOT_ANNOTATED_CDS"/>
    <property type="molecule type" value="Genomic_DNA"/>
</dbReference>
<dbReference type="EMBL" id="BC002260">
    <property type="protein sequence ID" value="AAH02260.1"/>
    <property type="molecule type" value="mRNA"/>
</dbReference>
<dbReference type="EMBL" id="BC043079">
    <property type="protein sequence ID" value="AAH43079.1"/>
    <property type="molecule type" value="mRNA"/>
</dbReference>
<dbReference type="EMBL" id="BC052177">
    <property type="protein sequence ID" value="AAH52177.1"/>
    <property type="molecule type" value="mRNA"/>
</dbReference>
<dbReference type="EMBL" id="AK011572">
    <property type="protein sequence ID" value="BAB27707.3"/>
    <property type="molecule type" value="mRNA"/>
</dbReference>
<dbReference type="EMBL" id="AK139598">
    <property type="protein sequence ID" value="BAE24079.1"/>
    <property type="molecule type" value="mRNA"/>
</dbReference>
<dbReference type="EMBL" id="AK161426">
    <property type="protein sequence ID" value="BAE36388.1"/>
    <property type="molecule type" value="mRNA"/>
</dbReference>
<dbReference type="EMBL" id="AK169600">
    <property type="protein sequence ID" value="BAE41251.1"/>
    <property type="molecule type" value="mRNA"/>
</dbReference>
<dbReference type="CCDS" id="CCDS18299.1">
    <molecule id="Q99JF8-1"/>
</dbReference>
<dbReference type="CCDS" id="CCDS71412.1">
    <molecule id="Q99JF8-2"/>
</dbReference>
<dbReference type="RefSeq" id="NP_001277456.1">
    <molecule id="Q99JF8-2"/>
    <property type="nucleotide sequence ID" value="NM_001290527.2"/>
</dbReference>
<dbReference type="RefSeq" id="NP_598709.1">
    <molecule id="Q99JF8-1"/>
    <property type="nucleotide sequence ID" value="NM_133948.6"/>
</dbReference>
<dbReference type="BMRB" id="Q99JF8"/>
<dbReference type="SMR" id="Q99JF8"/>
<dbReference type="BioGRID" id="221716">
    <property type="interactions" value="14"/>
</dbReference>
<dbReference type="FunCoup" id="Q99JF8">
    <property type="interactions" value="3608"/>
</dbReference>
<dbReference type="IntAct" id="Q99JF8">
    <property type="interactions" value="3"/>
</dbReference>
<dbReference type="MINT" id="Q99JF8"/>
<dbReference type="STRING" id="10090.ENSMUSP00000030207"/>
<dbReference type="GlyGen" id="Q99JF8">
    <property type="glycosylation" value="1 site, 1 O-linked glycan (1 site)"/>
</dbReference>
<dbReference type="iPTMnet" id="Q99JF8"/>
<dbReference type="PhosphoSitePlus" id="Q99JF8"/>
<dbReference type="SwissPalm" id="Q99JF8"/>
<dbReference type="jPOST" id="Q99JF8"/>
<dbReference type="PaxDb" id="10090-ENSMUSP00000030207"/>
<dbReference type="PeptideAtlas" id="Q99JF8"/>
<dbReference type="ProteomicsDB" id="301987">
    <molecule id="Q99JF8-1"/>
</dbReference>
<dbReference type="ProteomicsDB" id="301988">
    <molecule id="Q99JF8-2"/>
</dbReference>
<dbReference type="Pumba" id="Q99JF8"/>
<dbReference type="Antibodypedia" id="4436">
    <property type="antibodies" value="248 antibodies from 33 providers"/>
</dbReference>
<dbReference type="DNASU" id="101739"/>
<dbReference type="Ensembl" id="ENSMUST00000030207.15">
    <molecule id="Q99JF8-1"/>
    <property type="protein sequence ID" value="ENSMUSP00000030207.9"/>
    <property type="gene ID" value="ENSMUSG00000028484.17"/>
</dbReference>
<dbReference type="Ensembl" id="ENSMUST00000107215.9">
    <molecule id="Q99JF8-2"/>
    <property type="protein sequence ID" value="ENSMUSP00000102833.3"/>
    <property type="gene ID" value="ENSMUSG00000028484.17"/>
</dbReference>
<dbReference type="GeneID" id="101739"/>
<dbReference type="KEGG" id="mmu:101739"/>
<dbReference type="UCSC" id="uc008tkw.2">
    <molecule id="Q99JF8-1"/>
    <property type="organism name" value="mouse"/>
</dbReference>
<dbReference type="UCSC" id="uc008tkx.2">
    <molecule id="Q99JF8-2"/>
    <property type="organism name" value="mouse"/>
</dbReference>
<dbReference type="AGR" id="MGI:2142116"/>
<dbReference type="CTD" id="11168"/>
<dbReference type="MGI" id="MGI:2142116">
    <property type="gene designation" value="Psip1"/>
</dbReference>
<dbReference type="VEuPathDB" id="HostDB:ENSMUSG00000028484"/>
<dbReference type="eggNOG" id="KOG1904">
    <property type="taxonomic scope" value="Eukaryota"/>
</dbReference>
<dbReference type="GeneTree" id="ENSGT00940000154706"/>
<dbReference type="HOGENOM" id="CLU_034054_1_0_1"/>
<dbReference type="InParanoid" id="Q99JF8"/>
<dbReference type="OMA" id="HKKFFAG"/>
<dbReference type="OrthoDB" id="62853at2759"/>
<dbReference type="PhylomeDB" id="Q99JF8"/>
<dbReference type="TreeFam" id="TF105385"/>
<dbReference type="Reactome" id="R-MMU-9772755">
    <property type="pathway name" value="Formation of WDR5-containing histone-modifying complexes"/>
</dbReference>
<dbReference type="BioGRID-ORCS" id="101739">
    <property type="hits" value="4 hits in 83 CRISPR screens"/>
</dbReference>
<dbReference type="CD-CODE" id="DE1E139C">
    <property type="entry name" value="Chromatoid body"/>
</dbReference>
<dbReference type="ChiTaRS" id="Psip1">
    <property type="organism name" value="mouse"/>
</dbReference>
<dbReference type="PRO" id="PR:Q99JF8"/>
<dbReference type="Proteomes" id="UP000000589">
    <property type="component" value="Chromosome 4"/>
</dbReference>
<dbReference type="RNAct" id="Q99JF8">
    <property type="molecule type" value="protein"/>
</dbReference>
<dbReference type="Bgee" id="ENSMUSG00000028484">
    <property type="expression patterns" value="Expressed in embryonic post-anal tail and 272 other cell types or tissues"/>
</dbReference>
<dbReference type="ExpressionAtlas" id="Q99JF8">
    <property type="expression patterns" value="baseline and differential"/>
</dbReference>
<dbReference type="GO" id="GO:0000791">
    <property type="term" value="C:euchromatin"/>
    <property type="evidence" value="ECO:0000250"/>
    <property type="project" value="UniProtKB"/>
</dbReference>
<dbReference type="GO" id="GO:0000792">
    <property type="term" value="C:heterochromatin"/>
    <property type="evidence" value="ECO:0000250"/>
    <property type="project" value="UniProtKB"/>
</dbReference>
<dbReference type="GO" id="GO:0034399">
    <property type="term" value="C:nuclear periphery"/>
    <property type="evidence" value="ECO:0000250"/>
    <property type="project" value="UniProtKB"/>
</dbReference>
<dbReference type="GO" id="GO:0005654">
    <property type="term" value="C:nucleoplasm"/>
    <property type="evidence" value="ECO:0000250"/>
    <property type="project" value="UniProtKB"/>
</dbReference>
<dbReference type="GO" id="GO:0005634">
    <property type="term" value="C:nucleus"/>
    <property type="evidence" value="ECO:0000250"/>
    <property type="project" value="UniProtKB"/>
</dbReference>
<dbReference type="GO" id="GO:0003682">
    <property type="term" value="F:chromatin binding"/>
    <property type="evidence" value="ECO:0000250"/>
    <property type="project" value="UniProtKB"/>
</dbReference>
<dbReference type="GO" id="GO:0140297">
    <property type="term" value="F:DNA-binding transcription factor binding"/>
    <property type="evidence" value="ECO:0000250"/>
    <property type="project" value="UniProtKB"/>
</dbReference>
<dbReference type="GO" id="GO:0097100">
    <property type="term" value="F:supercoiled DNA binding"/>
    <property type="evidence" value="ECO:0000250"/>
    <property type="project" value="UniProtKB"/>
</dbReference>
<dbReference type="GO" id="GO:0003713">
    <property type="term" value="F:transcription coactivator activity"/>
    <property type="evidence" value="ECO:0000250"/>
    <property type="project" value="UniProtKB"/>
</dbReference>
<dbReference type="GO" id="GO:0000395">
    <property type="term" value="P:mRNA 5'-splice site recognition"/>
    <property type="evidence" value="ECO:0000250"/>
    <property type="project" value="UniProtKB"/>
</dbReference>
<dbReference type="GO" id="GO:0045944">
    <property type="term" value="P:positive regulation of transcription by RNA polymerase II"/>
    <property type="evidence" value="ECO:0000250"/>
    <property type="project" value="UniProtKB"/>
</dbReference>
<dbReference type="GO" id="GO:0009408">
    <property type="term" value="P:response to heat"/>
    <property type="evidence" value="ECO:0000314"/>
    <property type="project" value="UniProtKB"/>
</dbReference>
<dbReference type="GO" id="GO:0006979">
    <property type="term" value="P:response to oxidative stress"/>
    <property type="evidence" value="ECO:0000314"/>
    <property type="project" value="UniProtKB"/>
</dbReference>
<dbReference type="CDD" id="cd20151">
    <property type="entry name" value="PWWP_PSIP"/>
    <property type="match status" value="1"/>
</dbReference>
<dbReference type="FunFam" id="2.30.30.140:FF:000017">
    <property type="entry name" value="hepatoma-derived growth factor isoform X1"/>
    <property type="match status" value="1"/>
</dbReference>
<dbReference type="FunFam" id="1.20.930.10:FF:000005">
    <property type="entry name" value="PC4 and SFRS1-interacting protein-like isoform X1"/>
    <property type="match status" value="1"/>
</dbReference>
<dbReference type="Gene3D" id="2.30.30.140">
    <property type="match status" value="1"/>
</dbReference>
<dbReference type="Gene3D" id="1.20.930.10">
    <property type="entry name" value="Conserved domain common to transcription factors TFIIS, elongin A, CRSP70"/>
    <property type="match status" value="1"/>
</dbReference>
<dbReference type="InterPro" id="IPR036218">
    <property type="entry name" value="HIVI-bd_sf"/>
</dbReference>
<dbReference type="InterPro" id="IPR021567">
    <property type="entry name" value="LEDGF_IBD"/>
</dbReference>
<dbReference type="InterPro" id="IPR000313">
    <property type="entry name" value="PWWP_dom"/>
</dbReference>
<dbReference type="InterPro" id="IPR035441">
    <property type="entry name" value="TFIIS/LEDGF_dom_sf"/>
</dbReference>
<dbReference type="PANTHER" id="PTHR12550">
    <property type="entry name" value="HEPATOMA-DERIVED GROWTH FACTOR-RELATED"/>
    <property type="match status" value="1"/>
</dbReference>
<dbReference type="PANTHER" id="PTHR12550:SF42">
    <property type="entry name" value="PC4 AND SFRS1-INTERACTING PROTEIN"/>
    <property type="match status" value="1"/>
</dbReference>
<dbReference type="Pfam" id="PF11467">
    <property type="entry name" value="LEDGF"/>
    <property type="match status" value="1"/>
</dbReference>
<dbReference type="Pfam" id="PF00855">
    <property type="entry name" value="PWWP"/>
    <property type="match status" value="1"/>
</dbReference>
<dbReference type="PRINTS" id="PR01503">
    <property type="entry name" value="TREACLE"/>
</dbReference>
<dbReference type="SMART" id="SM00293">
    <property type="entry name" value="PWWP"/>
    <property type="match status" value="1"/>
</dbReference>
<dbReference type="SUPFAM" id="SSF140576">
    <property type="entry name" value="HIV integrase-binding domain"/>
    <property type="match status" value="1"/>
</dbReference>
<dbReference type="SUPFAM" id="SSF63748">
    <property type="entry name" value="Tudor/PWWP/MBT"/>
    <property type="match status" value="1"/>
</dbReference>
<dbReference type="PROSITE" id="PS50812">
    <property type="entry name" value="PWWP"/>
    <property type="match status" value="1"/>
</dbReference>
<comment type="function">
    <text evidence="1">Transcriptional coactivator involved in neuroepithelial stem cell differentiation and neurogenesis. Involved in particular in lens epithelial cell gene regulation and stress responses. May play an important role in lens epithelial to fiber cell terminal differentiation. May play a protective role during stress-induced apoptosis (By similarity).</text>
</comment>
<comment type="subunit">
    <text evidence="1">Monomer (By similarity). Interacts with IFRD1/PC4 (By similarity). Interacts (via IBD domain) with POGZ (via IBM motif) and CDCA7L (via IBM motifs) (By similarity). Interacts (via IBD domain) with KMT2A (via IBM motifs) with a moderate affinity whereas interacts with the KMT2A-MEN1 complex with a greater affinity; MEN1 enhances interaction of KMT2A with PSIP1 (By similarity). Interacts (via IBD domain) with IWS1 (via IBM motif), MED1 (via IBM motif) and DBF4 (via IBM motifs) (By similarity).</text>
</comment>
<comment type="subcellular location">
    <subcellularLocation>
        <location evidence="1">Nucleus</location>
    </subcellularLocation>
</comment>
<comment type="alternative products">
    <event type="alternative splicing"/>
    <isoform>
        <id>Q99JF8-1</id>
        <name>1</name>
        <name>Ledgfa</name>
        <name>p75</name>
        <sequence type="displayed"/>
    </isoform>
    <isoform>
        <id>Q99JF8-2</id>
        <name>2</name>
        <name>Ledgfb</name>
        <name>p52</name>
        <sequence type="described" ref="VSP_014299 VSP_014300"/>
    </isoform>
</comment>
<comment type="PTM">
    <text evidence="6">Citrullinated by PADI4.</text>
</comment>
<comment type="similarity">
    <text evidence="10">Belongs to the HDGF family.</text>
</comment>
<accession>Q99JF8</accession>
<accession>A2BI10</accession>
<accession>A2BI11</accession>
<accession>Q3TEJ7</accession>
<accession>Q3TTD7</accession>
<accession>Q3UTA1</accession>
<accession>Q80WQ7</accession>
<accession>Q99JF7</accession>
<accession>Q99LR4</accession>
<accession>Q9CT03</accession>
<proteinExistence type="evidence at protein level"/>
<evidence type="ECO:0000250" key="1">
    <source>
        <dbReference type="UniProtKB" id="O75475"/>
    </source>
</evidence>
<evidence type="ECO:0000250" key="2">
    <source>
        <dbReference type="UniProtKB" id="Q812D1"/>
    </source>
</evidence>
<evidence type="ECO:0000255" key="3"/>
<evidence type="ECO:0000255" key="4">
    <source>
        <dbReference type="PROSITE-ProRule" id="PRU00162"/>
    </source>
</evidence>
<evidence type="ECO:0000256" key="5">
    <source>
        <dbReference type="SAM" id="MobiDB-lite"/>
    </source>
</evidence>
<evidence type="ECO:0000269" key="6">
    <source>
    </source>
</evidence>
<evidence type="ECO:0000303" key="7">
    <source>
    </source>
</evidence>
<evidence type="ECO:0000303" key="8">
    <source ref="1"/>
</evidence>
<evidence type="ECO:0000303" key="9">
    <source ref="2"/>
</evidence>
<evidence type="ECO:0000305" key="10"/>
<evidence type="ECO:0007744" key="11">
    <source>
    </source>
</evidence>
<evidence type="ECO:0007744" key="12">
    <source>
    </source>
</evidence>
<evidence type="ECO:0007744" key="13">
    <source>
    </source>
</evidence>
<evidence type="ECO:0007744" key="14">
    <source>
    </source>
</evidence>
<evidence type="ECO:0007744" key="15">
    <source>
    </source>
</evidence>
<sequence>MTRDFKPGDLIFAKMKGYPHWPARVDEVPDGAVKPPTNKLPIFFFGTHETAFLGPKDIFPYSENKEKYGKPNKRKGFNEGLWEIDNNPKVKFSSQQASTKQSNASSDVEVEEKETNVSKEDTDQEEKASNEDVTKAVDITTPKAARRGRKRKAEKQVDTEEAGMVTAATASNVKASPKRGRPAATEVKIPKPRGRPKVVKQPCPSDGDMVIDEDKSKKKGPEEKQPKKQLKKEEEGQKEEEKPRKEPDKKEGKKEVESKRKNLAKPGVTSTSDSEDEDDQEGEKKRKGGRNFQAAHRRNMLKGQHEKEAGDRKRKQEEQMETEQQNKDEGKKPEVKKVEKKRETSMDSRLQRIHAEIKNSLKIDNLDVNRCIEALDELASLQVTMQQAQKHTEMITTLKKIRRFKVSQVIMEKSTMLYNKFKNMFLVGEGDSVITQVLNKSLAEQRQHEEANKTKDQGKKGPNKKLEKEPTGTKSLNGGSDAQESNHPQHNGDSNEDGKDSREASSKTKPPGEEREAEISLKESTLDN</sequence>
<gene>
    <name type="primary">Psip1</name>
    <name type="synonym">Ledgf</name>
</gene>
<name>PSIP1_MOUSE</name>
<organism>
    <name type="scientific">Mus musculus</name>
    <name type="common">Mouse</name>
    <dbReference type="NCBI Taxonomy" id="10090"/>
    <lineage>
        <taxon>Eukaryota</taxon>
        <taxon>Metazoa</taxon>
        <taxon>Chordata</taxon>
        <taxon>Craniata</taxon>
        <taxon>Vertebrata</taxon>
        <taxon>Euteleostomi</taxon>
        <taxon>Mammalia</taxon>
        <taxon>Eutheria</taxon>
        <taxon>Euarchontoglires</taxon>
        <taxon>Glires</taxon>
        <taxon>Rodentia</taxon>
        <taxon>Myomorpha</taxon>
        <taxon>Muroidea</taxon>
        <taxon>Muridae</taxon>
        <taxon>Murinae</taxon>
        <taxon>Mus</taxon>
        <taxon>Mus</taxon>
    </lineage>
</organism>
<reference key="1">
    <citation type="thesis" date="2000" institute="University of Manchester" country="United Kingdom">
        <authorList>
            <person name="Bashein A.M."/>
            <person name="Brady G."/>
        </authorList>
    </citation>
    <scope>NUCLEOTIDE SEQUENCE [MRNA] (ISOFORMS 1 AND 2)</scope>
    <source>
        <tissue>Testis</tissue>
    </source>
</reference>
<reference key="2">
    <citation type="submission" date="2001-01" db="EMBL/GenBank/DDBJ databases">
        <authorList>
            <person name="Yu L."/>
        </authorList>
    </citation>
    <scope>NUCLEOTIDE SEQUENCE [MRNA] (ISOFORMS 1 AND 2)</scope>
</reference>
<reference key="3">
    <citation type="journal article" date="2009" name="PLoS Biol.">
        <title>Lineage-specific biology revealed by a finished genome assembly of the mouse.</title>
        <authorList>
            <person name="Church D.M."/>
            <person name="Goodstadt L."/>
            <person name="Hillier L.W."/>
            <person name="Zody M.C."/>
            <person name="Goldstein S."/>
            <person name="She X."/>
            <person name="Bult C.J."/>
            <person name="Agarwala R."/>
            <person name="Cherry J.L."/>
            <person name="DiCuccio M."/>
            <person name="Hlavina W."/>
            <person name="Kapustin Y."/>
            <person name="Meric P."/>
            <person name="Maglott D."/>
            <person name="Birtle Z."/>
            <person name="Marques A.C."/>
            <person name="Graves T."/>
            <person name="Zhou S."/>
            <person name="Teague B."/>
            <person name="Potamousis K."/>
            <person name="Churas C."/>
            <person name="Place M."/>
            <person name="Herschleb J."/>
            <person name="Runnheim R."/>
            <person name="Forrest D."/>
            <person name="Amos-Landgraf J."/>
            <person name="Schwartz D.C."/>
            <person name="Cheng Z."/>
            <person name="Lindblad-Toh K."/>
            <person name="Eichler E.E."/>
            <person name="Ponting C.P."/>
        </authorList>
    </citation>
    <scope>NUCLEOTIDE SEQUENCE [LARGE SCALE GENOMIC DNA]</scope>
    <source>
        <strain>C57BL/6J</strain>
    </source>
</reference>
<reference key="4">
    <citation type="journal article" date="2004" name="Genome Res.">
        <title>The status, quality, and expansion of the NIH full-length cDNA project: the Mammalian Gene Collection (MGC).</title>
        <authorList>
            <consortium name="The MGC Project Team"/>
        </authorList>
    </citation>
    <scope>NUCLEOTIDE SEQUENCE [LARGE SCALE MRNA] (ISOFORMS 1 AND 2)</scope>
    <source>
        <strain>C57BL/6J</strain>
        <strain>Czech II</strain>
        <tissue>Brain</tissue>
        <tissue>Limb</tissue>
        <tissue>Mammary gland</tissue>
    </source>
</reference>
<reference key="5">
    <citation type="journal article" date="2005" name="Science">
        <title>The transcriptional landscape of the mammalian genome.</title>
        <authorList>
            <person name="Carninci P."/>
            <person name="Kasukawa T."/>
            <person name="Katayama S."/>
            <person name="Gough J."/>
            <person name="Frith M.C."/>
            <person name="Maeda N."/>
            <person name="Oyama R."/>
            <person name="Ravasi T."/>
            <person name="Lenhard B."/>
            <person name="Wells C."/>
            <person name="Kodzius R."/>
            <person name="Shimokawa K."/>
            <person name="Bajic V.B."/>
            <person name="Brenner S.E."/>
            <person name="Batalov S."/>
            <person name="Forrest A.R."/>
            <person name="Zavolan M."/>
            <person name="Davis M.J."/>
            <person name="Wilming L.G."/>
            <person name="Aidinis V."/>
            <person name="Allen J.E."/>
            <person name="Ambesi-Impiombato A."/>
            <person name="Apweiler R."/>
            <person name="Aturaliya R.N."/>
            <person name="Bailey T.L."/>
            <person name="Bansal M."/>
            <person name="Baxter L."/>
            <person name="Beisel K.W."/>
            <person name="Bersano T."/>
            <person name="Bono H."/>
            <person name="Chalk A.M."/>
            <person name="Chiu K.P."/>
            <person name="Choudhary V."/>
            <person name="Christoffels A."/>
            <person name="Clutterbuck D.R."/>
            <person name="Crowe M.L."/>
            <person name="Dalla E."/>
            <person name="Dalrymple B.P."/>
            <person name="de Bono B."/>
            <person name="Della Gatta G."/>
            <person name="di Bernardo D."/>
            <person name="Down T."/>
            <person name="Engstrom P."/>
            <person name="Fagiolini M."/>
            <person name="Faulkner G."/>
            <person name="Fletcher C.F."/>
            <person name="Fukushima T."/>
            <person name="Furuno M."/>
            <person name="Futaki S."/>
            <person name="Gariboldi M."/>
            <person name="Georgii-Hemming P."/>
            <person name="Gingeras T.R."/>
            <person name="Gojobori T."/>
            <person name="Green R.E."/>
            <person name="Gustincich S."/>
            <person name="Harbers M."/>
            <person name="Hayashi Y."/>
            <person name="Hensch T.K."/>
            <person name="Hirokawa N."/>
            <person name="Hill D."/>
            <person name="Huminiecki L."/>
            <person name="Iacono M."/>
            <person name="Ikeo K."/>
            <person name="Iwama A."/>
            <person name="Ishikawa T."/>
            <person name="Jakt M."/>
            <person name="Kanapin A."/>
            <person name="Katoh M."/>
            <person name="Kawasawa Y."/>
            <person name="Kelso J."/>
            <person name="Kitamura H."/>
            <person name="Kitano H."/>
            <person name="Kollias G."/>
            <person name="Krishnan S.P."/>
            <person name="Kruger A."/>
            <person name="Kummerfeld S.K."/>
            <person name="Kurochkin I.V."/>
            <person name="Lareau L.F."/>
            <person name="Lazarevic D."/>
            <person name="Lipovich L."/>
            <person name="Liu J."/>
            <person name="Liuni S."/>
            <person name="McWilliam S."/>
            <person name="Madan Babu M."/>
            <person name="Madera M."/>
            <person name="Marchionni L."/>
            <person name="Matsuda H."/>
            <person name="Matsuzawa S."/>
            <person name="Miki H."/>
            <person name="Mignone F."/>
            <person name="Miyake S."/>
            <person name="Morris K."/>
            <person name="Mottagui-Tabar S."/>
            <person name="Mulder N."/>
            <person name="Nakano N."/>
            <person name="Nakauchi H."/>
            <person name="Ng P."/>
            <person name="Nilsson R."/>
            <person name="Nishiguchi S."/>
            <person name="Nishikawa S."/>
            <person name="Nori F."/>
            <person name="Ohara O."/>
            <person name="Okazaki Y."/>
            <person name="Orlando V."/>
            <person name="Pang K.C."/>
            <person name="Pavan W.J."/>
            <person name="Pavesi G."/>
            <person name="Pesole G."/>
            <person name="Petrovsky N."/>
            <person name="Piazza S."/>
            <person name="Reed J."/>
            <person name="Reid J.F."/>
            <person name="Ring B.Z."/>
            <person name="Ringwald M."/>
            <person name="Rost B."/>
            <person name="Ruan Y."/>
            <person name="Salzberg S.L."/>
            <person name="Sandelin A."/>
            <person name="Schneider C."/>
            <person name="Schoenbach C."/>
            <person name="Sekiguchi K."/>
            <person name="Semple C.A."/>
            <person name="Seno S."/>
            <person name="Sessa L."/>
            <person name="Sheng Y."/>
            <person name="Shibata Y."/>
            <person name="Shimada H."/>
            <person name="Shimada K."/>
            <person name="Silva D."/>
            <person name="Sinclair B."/>
            <person name="Sperling S."/>
            <person name="Stupka E."/>
            <person name="Sugiura K."/>
            <person name="Sultana R."/>
            <person name="Takenaka Y."/>
            <person name="Taki K."/>
            <person name="Tammoja K."/>
            <person name="Tan S.L."/>
            <person name="Tang S."/>
            <person name="Taylor M.S."/>
            <person name="Tegner J."/>
            <person name="Teichmann S.A."/>
            <person name="Ueda H.R."/>
            <person name="van Nimwegen E."/>
            <person name="Verardo R."/>
            <person name="Wei C.L."/>
            <person name="Yagi K."/>
            <person name="Yamanishi H."/>
            <person name="Zabarovsky E."/>
            <person name="Zhu S."/>
            <person name="Zimmer A."/>
            <person name="Hide W."/>
            <person name="Bult C."/>
            <person name="Grimmond S.M."/>
            <person name="Teasdale R.D."/>
            <person name="Liu E.T."/>
            <person name="Brusic V."/>
            <person name="Quackenbush J."/>
            <person name="Wahlestedt C."/>
            <person name="Mattick J.S."/>
            <person name="Hume D.A."/>
            <person name="Kai C."/>
            <person name="Sasaki D."/>
            <person name="Tomaru Y."/>
            <person name="Fukuda S."/>
            <person name="Kanamori-Katayama M."/>
            <person name="Suzuki M."/>
            <person name="Aoki J."/>
            <person name="Arakawa T."/>
            <person name="Iida J."/>
            <person name="Imamura K."/>
            <person name="Itoh M."/>
            <person name="Kato T."/>
            <person name="Kawaji H."/>
            <person name="Kawagashira N."/>
            <person name="Kawashima T."/>
            <person name="Kojima M."/>
            <person name="Kondo S."/>
            <person name="Konno H."/>
            <person name="Nakano K."/>
            <person name="Ninomiya N."/>
            <person name="Nishio T."/>
            <person name="Okada M."/>
            <person name="Plessy C."/>
            <person name="Shibata K."/>
            <person name="Shiraki T."/>
            <person name="Suzuki S."/>
            <person name="Tagami M."/>
            <person name="Waki K."/>
            <person name="Watahiki A."/>
            <person name="Okamura-Oho Y."/>
            <person name="Suzuki H."/>
            <person name="Kawai J."/>
            <person name="Hayashizaki Y."/>
        </authorList>
    </citation>
    <scope>NUCLEOTIDE SEQUENCE [LARGE SCALE MRNA] OF 1-248</scope>
    <source>
        <strain>C57BL/6J</strain>
        <strain>NOD</strain>
        <tissue>Egg</tissue>
        <tissue>Embryo</tissue>
        <tissue>Testis</tissue>
        <tissue>Thymus</tissue>
    </source>
</reference>
<reference key="6">
    <citation type="journal article" date="2006" name="Mol. Cell. Proteomics">
        <title>Comprehensive identification of phosphorylation sites in postsynaptic density preparations.</title>
        <authorList>
            <person name="Trinidad J.C."/>
            <person name="Specht C.G."/>
            <person name="Thalhammer A."/>
            <person name="Schoepfer R."/>
            <person name="Burlingame A.L."/>
        </authorList>
    </citation>
    <scope>PHOSPHORYLATION [LARGE SCALE ANALYSIS] AT SER-176</scope>
    <scope>IDENTIFICATION BY MASS SPECTROMETRY [LARGE SCALE ANALYSIS]</scope>
    <source>
        <tissue>Brain</tissue>
    </source>
</reference>
<reference key="7">
    <citation type="journal article" date="2007" name="Proc. Natl. Acad. Sci. U.S.A.">
        <title>Large-scale phosphorylation analysis of mouse liver.</title>
        <authorList>
            <person name="Villen J."/>
            <person name="Beausoleil S.A."/>
            <person name="Gerber S.A."/>
            <person name="Gygi S.P."/>
        </authorList>
    </citation>
    <scope>PHOSPHORYLATION [LARGE SCALE ANALYSIS] AT SER-106; SER-176; SER-272 AND SER-274</scope>
    <scope>IDENTIFICATION BY MASS SPECTROMETRY [LARGE SCALE ANALYSIS]</scope>
    <source>
        <tissue>Liver</tissue>
    </source>
</reference>
<reference key="8">
    <citation type="journal article" date="2009" name="Immunity">
        <title>The phagosomal proteome in interferon-gamma-activated macrophages.</title>
        <authorList>
            <person name="Trost M."/>
            <person name="English L."/>
            <person name="Lemieux S."/>
            <person name="Courcelles M."/>
            <person name="Desjardins M."/>
            <person name="Thibault P."/>
        </authorList>
    </citation>
    <scope>PHOSPHORYLATION [LARGE SCALE ANALYSIS] AT SER-106; SER-176; SER-272 AND SER-274</scope>
    <scope>IDENTIFICATION BY MASS SPECTROMETRY [LARGE SCALE ANALYSIS]</scope>
</reference>
<reference key="9">
    <citation type="journal article" date="2009" name="Mol. Cell. Proteomics">
        <title>Large scale localization of protein phosphorylation by use of electron capture dissociation mass spectrometry.</title>
        <authorList>
            <person name="Sweet S.M."/>
            <person name="Bailey C.M."/>
            <person name="Cunningham D.L."/>
            <person name="Heath J.K."/>
            <person name="Cooper H.J."/>
        </authorList>
    </citation>
    <scope>PHOSPHORYLATION [LARGE SCALE ANALYSIS] AT SER-176</scope>
    <scope>IDENTIFICATION BY MASS SPECTROMETRY [LARGE SCALE ANALYSIS]</scope>
    <source>
        <tissue>Embryonic fibroblast</tissue>
    </source>
</reference>
<reference key="10">
    <citation type="journal article" date="2010" name="Cell">
        <title>A tissue-specific atlas of mouse protein phosphorylation and expression.</title>
        <authorList>
            <person name="Huttlin E.L."/>
            <person name="Jedrychowski M.P."/>
            <person name="Elias J.E."/>
            <person name="Goswami T."/>
            <person name="Rad R."/>
            <person name="Beausoleil S.A."/>
            <person name="Villen J."/>
            <person name="Haas W."/>
            <person name="Sowa M.E."/>
            <person name="Gygi S.P."/>
        </authorList>
    </citation>
    <scope>PHOSPHORYLATION [LARGE SCALE ANALYSIS] AT SER-105; SER-106; THR-115; THR-122; SER-129; THR-141; SER-176; SER-270; THR-271; SER-272; SER-274 AND SER-520</scope>
    <scope>IDENTIFICATION BY MASS SPECTROMETRY [LARGE SCALE ANALYSIS]</scope>
    <source>
        <tissue>Brain</tissue>
        <tissue>Brown adipose tissue</tissue>
        <tissue>Heart</tissue>
        <tissue>Kidney</tissue>
        <tissue>Liver</tissue>
        <tissue>Lung</tissue>
        <tissue>Pancreas</tissue>
        <tissue>Spleen</tissue>
        <tissue>Testis</tissue>
    </source>
</reference>
<reference key="11">
    <citation type="journal article" date="2014" name="Nature">
        <title>Citrullination regulates pluripotency and histone H1 binding to chromatin.</title>
        <authorList>
            <person name="Christophorou M.A."/>
            <person name="Castelo-Branco G."/>
            <person name="Halley-Stott R.P."/>
            <person name="Oliveira C.S."/>
            <person name="Loos R."/>
            <person name="Radzisheuskaya A."/>
            <person name="Mowen K.A."/>
            <person name="Bertone P."/>
            <person name="Silva J.C."/>
            <person name="Zernicka-Goetz M."/>
            <person name="Nielsen M.L."/>
            <person name="Gurdon J.B."/>
            <person name="Kouzarides T."/>
        </authorList>
    </citation>
    <scope>CITRULLINATION AT ARG-515</scope>
</reference>
<feature type="chain" id="PRO_0000191709" description="PC4 and SFRS1-interacting protein">
    <location>
        <begin position="1"/>
        <end position="528"/>
    </location>
</feature>
<feature type="domain" description="PWWP" evidence="4">
    <location>
        <begin position="7"/>
        <end position="64"/>
    </location>
</feature>
<feature type="region of interest" description="Disordered" evidence="5">
    <location>
        <begin position="61"/>
        <end position="348"/>
    </location>
</feature>
<feature type="region of interest" description="Integrase-binding domain (IBD)" evidence="1">
    <location>
        <begin position="338"/>
        <end position="415"/>
    </location>
</feature>
<feature type="region of interest" description="Disordered" evidence="5">
    <location>
        <begin position="444"/>
        <end position="528"/>
    </location>
</feature>
<feature type="coiled-coil region" evidence="3">
    <location>
        <begin position="306"/>
        <end position="332"/>
    </location>
</feature>
<feature type="coiled-coil region" evidence="3">
    <location>
        <begin position="369"/>
        <end position="393"/>
    </location>
</feature>
<feature type="short sequence motif" description="Nuclear localization signal" evidence="1">
    <location>
        <begin position="146"/>
        <end position="156"/>
    </location>
</feature>
<feature type="compositionally biased region" description="Polar residues" evidence="5">
    <location>
        <begin position="92"/>
        <end position="106"/>
    </location>
</feature>
<feature type="compositionally biased region" description="Basic and acidic residues" evidence="5">
    <location>
        <begin position="113"/>
        <end position="135"/>
    </location>
</feature>
<feature type="compositionally biased region" description="Basic residues" evidence="5">
    <location>
        <begin position="144"/>
        <end position="153"/>
    </location>
</feature>
<feature type="compositionally biased region" description="Basic and acidic residues" evidence="5">
    <location>
        <begin position="212"/>
        <end position="260"/>
    </location>
</feature>
<feature type="compositionally biased region" description="Basic residues" evidence="5">
    <location>
        <begin position="285"/>
        <end position="300"/>
    </location>
</feature>
<feature type="compositionally biased region" description="Basic and acidic residues" evidence="5">
    <location>
        <begin position="303"/>
        <end position="348"/>
    </location>
</feature>
<feature type="compositionally biased region" description="Basic and acidic residues" evidence="5">
    <location>
        <begin position="444"/>
        <end position="471"/>
    </location>
</feature>
<feature type="compositionally biased region" description="Polar residues" evidence="5">
    <location>
        <begin position="472"/>
        <end position="492"/>
    </location>
</feature>
<feature type="compositionally biased region" description="Basic and acidic residues" evidence="5">
    <location>
        <begin position="496"/>
        <end position="528"/>
    </location>
</feature>
<feature type="modified residue" description="Phosphoserine" evidence="2">
    <location>
        <position position="102"/>
    </location>
</feature>
<feature type="modified residue" description="Phosphoserine" evidence="15">
    <location>
        <position position="105"/>
    </location>
</feature>
<feature type="modified residue" description="Phosphoserine" evidence="12 14 15">
    <location>
        <position position="106"/>
    </location>
</feature>
<feature type="modified residue" description="Phosphothreonine" evidence="15">
    <location>
        <position position="115"/>
    </location>
</feature>
<feature type="modified residue" description="Phosphothreonine" evidence="15">
    <location>
        <position position="122"/>
    </location>
</feature>
<feature type="modified residue" description="Phosphoserine" evidence="15">
    <location>
        <position position="129"/>
    </location>
</feature>
<feature type="modified residue" description="Phosphothreonine" evidence="15">
    <location>
        <position position="141"/>
    </location>
</feature>
<feature type="modified residue" description="Phosphoserine" evidence="11 12 13 14 15">
    <location>
        <position position="176"/>
    </location>
</feature>
<feature type="modified residue" description="Phosphoserine" evidence="1">
    <location>
        <position position="205"/>
    </location>
</feature>
<feature type="modified residue" description="Phosphoserine" evidence="15">
    <location>
        <position position="270"/>
    </location>
</feature>
<feature type="modified residue" description="Phosphothreonine" evidence="15">
    <location>
        <position position="271"/>
    </location>
</feature>
<feature type="modified residue" description="Phosphoserine" evidence="12 14 15">
    <location>
        <position position="272"/>
    </location>
</feature>
<feature type="modified residue" description="Phosphoserine" evidence="12 14 15">
    <location>
        <position position="274"/>
    </location>
</feature>
<feature type="modified residue" description="Phosphoserine" evidence="1">
    <location>
        <position position="432"/>
    </location>
</feature>
<feature type="modified residue" description="Phosphothreonine" evidence="1">
    <location>
        <position position="435"/>
    </location>
</feature>
<feature type="modified residue" description="Phosphoserine" evidence="1">
    <location>
        <position position="441"/>
    </location>
</feature>
<feature type="modified residue" description="Citrulline" evidence="6">
    <location>
        <position position="515"/>
    </location>
</feature>
<feature type="modified residue" description="Phosphoserine" evidence="15">
    <location>
        <position position="520"/>
    </location>
</feature>
<feature type="modified residue" description="Phosphothreonine" evidence="1">
    <location>
        <position position="525"/>
    </location>
</feature>
<feature type="cross-link" description="Glycyl lysine isopeptide (Lys-Gly) (interchain with G-Cter in SUMO2)" evidence="1">
    <location>
        <position position="75"/>
    </location>
</feature>
<feature type="splice variant" id="VSP_014299" description="In isoform 2." evidence="7 8 9">
    <original>QQNKDEGK</original>
    <variation>HQTTCNLQ</variation>
    <location>
        <begin position="324"/>
        <end position="331"/>
    </location>
</feature>
<feature type="splice variant" id="VSP_014300" description="In isoform 2." evidence="7 8 9">
    <location>
        <begin position="332"/>
        <end position="528"/>
    </location>
</feature>
<feature type="sequence conflict" description="In Ref. 4; AAH52177." evidence="10" ref="4">
    <original>HQTTCNLQ</original>
    <variation>QLKALIQ</variation>
    <location sequence="Q99JF8-2">
        <begin position="324"/>
        <end position="331"/>
    </location>
</feature>
<protein>
    <recommendedName>
        <fullName>PC4 and SFRS1-interacting protein</fullName>
    </recommendedName>
    <alternativeName>
        <fullName>Lens epithelium-derived growth factor</fullName>
        <shortName>mLEDGF</shortName>
    </alternativeName>
</protein>
<keyword id="KW-0025">Alternative splicing</keyword>
<keyword id="KW-0164">Citrullination</keyword>
<keyword id="KW-0175">Coiled coil</keyword>
<keyword id="KW-0238">DNA-binding</keyword>
<keyword id="KW-1017">Isopeptide bond</keyword>
<keyword id="KW-0539">Nucleus</keyword>
<keyword id="KW-0597">Phosphoprotein</keyword>
<keyword id="KW-1185">Reference proteome</keyword>
<keyword id="KW-0804">Transcription</keyword>
<keyword id="KW-0805">Transcription regulation</keyword>
<keyword id="KW-0832">Ubl conjugation</keyword>